<sequence length="149" mass="17117">MHCPFCSATDTKVIDSRLVAEGHQVRRRRECTECHERFTTFEGAELVMPRVIKRDGSRQPFDEEKLQSGMLRAVEKRPVSMDEIEQALSKIKSTLRATGEREVPSEMVGNLMMEQLMNLDKVAYIRFASVYRAFEDVSEFGEAIAKLQK</sequence>
<proteinExistence type="inferred from homology"/>
<accession>A4Y965</accession>
<feature type="chain" id="PRO_1000080828" description="Transcriptional repressor NrdR">
    <location>
        <begin position="1"/>
        <end position="149"/>
    </location>
</feature>
<feature type="domain" description="ATP-cone" evidence="1">
    <location>
        <begin position="49"/>
        <end position="139"/>
    </location>
</feature>
<feature type="zinc finger region" evidence="1">
    <location>
        <begin position="3"/>
        <end position="34"/>
    </location>
</feature>
<reference key="1">
    <citation type="submission" date="2007-04" db="EMBL/GenBank/DDBJ databases">
        <title>Complete sequence of Shewanella putrefaciens CN-32.</title>
        <authorList>
            <consortium name="US DOE Joint Genome Institute"/>
            <person name="Copeland A."/>
            <person name="Lucas S."/>
            <person name="Lapidus A."/>
            <person name="Barry K."/>
            <person name="Detter J.C."/>
            <person name="Glavina del Rio T."/>
            <person name="Hammon N."/>
            <person name="Israni S."/>
            <person name="Dalin E."/>
            <person name="Tice H."/>
            <person name="Pitluck S."/>
            <person name="Chain P."/>
            <person name="Malfatti S."/>
            <person name="Shin M."/>
            <person name="Vergez L."/>
            <person name="Schmutz J."/>
            <person name="Larimer F."/>
            <person name="Land M."/>
            <person name="Hauser L."/>
            <person name="Kyrpides N."/>
            <person name="Mikhailova N."/>
            <person name="Romine M.F."/>
            <person name="Fredrickson J."/>
            <person name="Tiedje J."/>
            <person name="Richardson P."/>
        </authorList>
    </citation>
    <scope>NUCLEOTIDE SEQUENCE [LARGE SCALE GENOMIC DNA]</scope>
    <source>
        <strain>CN-32 / ATCC BAA-453</strain>
    </source>
</reference>
<dbReference type="EMBL" id="CP000681">
    <property type="protein sequence ID" value="ABP76498.1"/>
    <property type="molecule type" value="Genomic_DNA"/>
</dbReference>
<dbReference type="SMR" id="A4Y965"/>
<dbReference type="STRING" id="319224.Sputcn32_2779"/>
<dbReference type="KEGG" id="spc:Sputcn32_2779"/>
<dbReference type="eggNOG" id="COG1327">
    <property type="taxonomic scope" value="Bacteria"/>
</dbReference>
<dbReference type="HOGENOM" id="CLU_108412_0_0_6"/>
<dbReference type="GO" id="GO:0005524">
    <property type="term" value="F:ATP binding"/>
    <property type="evidence" value="ECO:0007669"/>
    <property type="project" value="UniProtKB-KW"/>
</dbReference>
<dbReference type="GO" id="GO:0003677">
    <property type="term" value="F:DNA binding"/>
    <property type="evidence" value="ECO:0007669"/>
    <property type="project" value="UniProtKB-KW"/>
</dbReference>
<dbReference type="GO" id="GO:0008270">
    <property type="term" value="F:zinc ion binding"/>
    <property type="evidence" value="ECO:0007669"/>
    <property type="project" value="UniProtKB-UniRule"/>
</dbReference>
<dbReference type="GO" id="GO:0045892">
    <property type="term" value="P:negative regulation of DNA-templated transcription"/>
    <property type="evidence" value="ECO:0007669"/>
    <property type="project" value="UniProtKB-UniRule"/>
</dbReference>
<dbReference type="HAMAP" id="MF_00440">
    <property type="entry name" value="NrdR"/>
    <property type="match status" value="1"/>
</dbReference>
<dbReference type="InterPro" id="IPR005144">
    <property type="entry name" value="ATP-cone_dom"/>
</dbReference>
<dbReference type="InterPro" id="IPR055173">
    <property type="entry name" value="NrdR-like_N"/>
</dbReference>
<dbReference type="InterPro" id="IPR003796">
    <property type="entry name" value="RNR_NrdR-like"/>
</dbReference>
<dbReference type="NCBIfam" id="TIGR00244">
    <property type="entry name" value="transcriptional regulator NrdR"/>
    <property type="match status" value="1"/>
</dbReference>
<dbReference type="PANTHER" id="PTHR30455">
    <property type="entry name" value="TRANSCRIPTIONAL REPRESSOR NRDR"/>
    <property type="match status" value="1"/>
</dbReference>
<dbReference type="PANTHER" id="PTHR30455:SF2">
    <property type="entry name" value="TRANSCRIPTIONAL REPRESSOR NRDR"/>
    <property type="match status" value="1"/>
</dbReference>
<dbReference type="Pfam" id="PF03477">
    <property type="entry name" value="ATP-cone"/>
    <property type="match status" value="1"/>
</dbReference>
<dbReference type="Pfam" id="PF22811">
    <property type="entry name" value="Zn_ribbon_NrdR"/>
    <property type="match status" value="1"/>
</dbReference>
<dbReference type="PROSITE" id="PS51161">
    <property type="entry name" value="ATP_CONE"/>
    <property type="match status" value="1"/>
</dbReference>
<name>NRDR_SHEPC</name>
<gene>
    <name evidence="1" type="primary">nrdR</name>
    <name type="ordered locus">Sputcn32_2779</name>
</gene>
<keyword id="KW-0067">ATP-binding</keyword>
<keyword id="KW-0238">DNA-binding</keyword>
<keyword id="KW-0479">Metal-binding</keyword>
<keyword id="KW-0547">Nucleotide-binding</keyword>
<keyword id="KW-0678">Repressor</keyword>
<keyword id="KW-0804">Transcription</keyword>
<keyword id="KW-0805">Transcription regulation</keyword>
<keyword id="KW-0862">Zinc</keyword>
<keyword id="KW-0863">Zinc-finger</keyword>
<protein>
    <recommendedName>
        <fullName evidence="1">Transcriptional repressor NrdR</fullName>
    </recommendedName>
</protein>
<organism>
    <name type="scientific">Shewanella putrefaciens (strain CN-32 / ATCC BAA-453)</name>
    <dbReference type="NCBI Taxonomy" id="319224"/>
    <lineage>
        <taxon>Bacteria</taxon>
        <taxon>Pseudomonadati</taxon>
        <taxon>Pseudomonadota</taxon>
        <taxon>Gammaproteobacteria</taxon>
        <taxon>Alteromonadales</taxon>
        <taxon>Shewanellaceae</taxon>
        <taxon>Shewanella</taxon>
    </lineage>
</organism>
<evidence type="ECO:0000255" key="1">
    <source>
        <dbReference type="HAMAP-Rule" id="MF_00440"/>
    </source>
</evidence>
<comment type="function">
    <text evidence="1">Negatively regulates transcription of bacterial ribonucleotide reductase nrd genes and operons by binding to NrdR-boxes.</text>
</comment>
<comment type="cofactor">
    <cofactor evidence="1">
        <name>Zn(2+)</name>
        <dbReference type="ChEBI" id="CHEBI:29105"/>
    </cofactor>
    <text evidence="1">Binds 1 zinc ion.</text>
</comment>
<comment type="similarity">
    <text evidence="1">Belongs to the NrdR family.</text>
</comment>